<organism>
    <name type="scientific">Azotobacter vinelandii (strain DJ / ATCC BAA-1303)</name>
    <dbReference type="NCBI Taxonomy" id="322710"/>
    <lineage>
        <taxon>Bacteria</taxon>
        <taxon>Pseudomonadati</taxon>
        <taxon>Pseudomonadota</taxon>
        <taxon>Gammaproteobacteria</taxon>
        <taxon>Pseudomonadales</taxon>
        <taxon>Pseudomonadaceae</taxon>
        <taxon>Azotobacter</taxon>
    </lineage>
</organism>
<feature type="chain" id="PRO_1000213114" description="Urease accessory protein UreE">
    <location>
        <begin position="1"/>
        <end position="166"/>
    </location>
</feature>
<protein>
    <recommendedName>
        <fullName evidence="1">Urease accessory protein UreE</fullName>
    </recommendedName>
</protein>
<name>UREE_AZOVD</name>
<comment type="function">
    <text evidence="1">Involved in urease metallocenter assembly. Binds nickel. Probably functions as a nickel donor during metallocenter assembly.</text>
</comment>
<comment type="subcellular location">
    <subcellularLocation>
        <location evidence="1">Cytoplasm</location>
    </subcellularLocation>
</comment>
<comment type="similarity">
    <text evidence="1">Belongs to the UreE family.</text>
</comment>
<proteinExistence type="inferred from homology"/>
<reference key="1">
    <citation type="journal article" date="2009" name="J. Bacteriol.">
        <title>Genome sequence of Azotobacter vinelandii, an obligate aerobe specialized to support diverse anaerobic metabolic processes.</title>
        <authorList>
            <person name="Setubal J.C."/>
            <person name="Dos Santos P."/>
            <person name="Goldman B.S."/>
            <person name="Ertesvaag H."/>
            <person name="Espin G."/>
            <person name="Rubio L.M."/>
            <person name="Valla S."/>
            <person name="Almeida N.F."/>
            <person name="Balasubramanian D."/>
            <person name="Cromes L."/>
            <person name="Curatti L."/>
            <person name="Du Z."/>
            <person name="Godsy E."/>
            <person name="Goodner B."/>
            <person name="Hellner-Burris K."/>
            <person name="Hernandez J.A."/>
            <person name="Houmiel K."/>
            <person name="Imperial J."/>
            <person name="Kennedy C."/>
            <person name="Larson T.J."/>
            <person name="Latreille P."/>
            <person name="Ligon L.S."/>
            <person name="Lu J."/>
            <person name="Maerk M."/>
            <person name="Miller N.M."/>
            <person name="Norton S."/>
            <person name="O'Carroll I.P."/>
            <person name="Paulsen I."/>
            <person name="Raulfs E.C."/>
            <person name="Roemer R."/>
            <person name="Rosser J."/>
            <person name="Segura D."/>
            <person name="Slater S."/>
            <person name="Stricklin S.L."/>
            <person name="Studholme D.J."/>
            <person name="Sun J."/>
            <person name="Viana C.J."/>
            <person name="Wallin E."/>
            <person name="Wang B."/>
            <person name="Wheeler C."/>
            <person name="Zhu H."/>
            <person name="Dean D.R."/>
            <person name="Dixon R."/>
            <person name="Wood D."/>
        </authorList>
    </citation>
    <scope>NUCLEOTIDE SEQUENCE [LARGE SCALE GENOMIC DNA]</scope>
    <source>
        <strain>DJ / ATCC BAA-1303</strain>
    </source>
</reference>
<evidence type="ECO:0000255" key="1">
    <source>
        <dbReference type="HAMAP-Rule" id="MF_00822"/>
    </source>
</evidence>
<gene>
    <name evidence="1" type="primary">ureE</name>
    <name type="ordered locus">Avin_09400</name>
</gene>
<keyword id="KW-0143">Chaperone</keyword>
<keyword id="KW-0963">Cytoplasm</keyword>
<keyword id="KW-0533">Nickel</keyword>
<dbReference type="EMBL" id="CP001157">
    <property type="protein sequence ID" value="ACO77179.1"/>
    <property type="molecule type" value="Genomic_DNA"/>
</dbReference>
<dbReference type="RefSeq" id="WP_012699604.1">
    <property type="nucleotide sequence ID" value="NC_012560.1"/>
</dbReference>
<dbReference type="SMR" id="C1DNG3"/>
<dbReference type="STRING" id="322710.Avin_09400"/>
<dbReference type="EnsemblBacteria" id="ACO77179">
    <property type="protein sequence ID" value="ACO77179"/>
    <property type="gene ID" value="Avin_09400"/>
</dbReference>
<dbReference type="GeneID" id="88184308"/>
<dbReference type="KEGG" id="avn:Avin_09400"/>
<dbReference type="eggNOG" id="COG2371">
    <property type="taxonomic scope" value="Bacteria"/>
</dbReference>
<dbReference type="HOGENOM" id="CLU_093757_2_0_6"/>
<dbReference type="OrthoDB" id="5421304at2"/>
<dbReference type="Proteomes" id="UP000002424">
    <property type="component" value="Chromosome"/>
</dbReference>
<dbReference type="GO" id="GO:0005737">
    <property type="term" value="C:cytoplasm"/>
    <property type="evidence" value="ECO:0007669"/>
    <property type="project" value="UniProtKB-SubCell"/>
</dbReference>
<dbReference type="GO" id="GO:0016151">
    <property type="term" value="F:nickel cation binding"/>
    <property type="evidence" value="ECO:0007669"/>
    <property type="project" value="UniProtKB-UniRule"/>
</dbReference>
<dbReference type="GO" id="GO:0051082">
    <property type="term" value="F:unfolded protein binding"/>
    <property type="evidence" value="ECO:0007669"/>
    <property type="project" value="UniProtKB-UniRule"/>
</dbReference>
<dbReference type="GO" id="GO:0006457">
    <property type="term" value="P:protein folding"/>
    <property type="evidence" value="ECO:0007669"/>
    <property type="project" value="InterPro"/>
</dbReference>
<dbReference type="GO" id="GO:0065003">
    <property type="term" value="P:protein-containing complex assembly"/>
    <property type="evidence" value="ECO:0007669"/>
    <property type="project" value="InterPro"/>
</dbReference>
<dbReference type="GO" id="GO:0019627">
    <property type="term" value="P:urea metabolic process"/>
    <property type="evidence" value="ECO:0007669"/>
    <property type="project" value="InterPro"/>
</dbReference>
<dbReference type="CDD" id="cd00571">
    <property type="entry name" value="UreE"/>
    <property type="match status" value="1"/>
</dbReference>
<dbReference type="Gene3D" id="2.60.260.20">
    <property type="entry name" value="Urease metallochaperone UreE, N-terminal domain"/>
    <property type="match status" value="1"/>
</dbReference>
<dbReference type="Gene3D" id="3.30.70.790">
    <property type="entry name" value="UreE, C-terminal domain"/>
    <property type="match status" value="1"/>
</dbReference>
<dbReference type="HAMAP" id="MF_00822">
    <property type="entry name" value="UreE"/>
    <property type="match status" value="1"/>
</dbReference>
<dbReference type="InterPro" id="IPR012406">
    <property type="entry name" value="UreE"/>
</dbReference>
<dbReference type="InterPro" id="IPR007864">
    <property type="entry name" value="UreE_C_dom"/>
</dbReference>
<dbReference type="InterPro" id="IPR004029">
    <property type="entry name" value="UreE_N"/>
</dbReference>
<dbReference type="InterPro" id="IPR036118">
    <property type="entry name" value="UreE_N_sf"/>
</dbReference>
<dbReference type="NCBIfam" id="NF009751">
    <property type="entry name" value="PRK13261.1-1"/>
    <property type="match status" value="1"/>
</dbReference>
<dbReference type="NCBIfam" id="NF009753">
    <property type="entry name" value="PRK13261.1-5"/>
    <property type="match status" value="1"/>
</dbReference>
<dbReference type="Pfam" id="PF05194">
    <property type="entry name" value="UreE_C"/>
    <property type="match status" value="1"/>
</dbReference>
<dbReference type="Pfam" id="PF02814">
    <property type="entry name" value="UreE_N"/>
    <property type="match status" value="1"/>
</dbReference>
<dbReference type="PIRSF" id="PIRSF036402">
    <property type="entry name" value="Ureas_acces_UreE"/>
    <property type="match status" value="1"/>
</dbReference>
<dbReference type="SMART" id="SM00988">
    <property type="entry name" value="UreE_N"/>
    <property type="match status" value="1"/>
</dbReference>
<dbReference type="SUPFAM" id="SSF69737">
    <property type="entry name" value="Urease metallochaperone UreE, C-terminal domain"/>
    <property type="match status" value="1"/>
</dbReference>
<dbReference type="SUPFAM" id="SSF69287">
    <property type="entry name" value="Urease metallochaperone UreE, N-terminal domain"/>
    <property type="match status" value="1"/>
</dbReference>
<sequence>MLMIRQRTTARPEWDAELELSLEARSKSRLRCFTTAGEDVGLFLERGQPPLADGDFLLADDGRLVRVRARPERLLHVACANAFELTRAAYHLGNRHVALQIGDGWLRLLDDYVLEDMLRQLGARVETVEAPFQPEHGAYGGGHHHSHGGEAEFSYAPKLHQFGVRK</sequence>
<accession>C1DNG3</accession>